<accession>B3QYH8</accession>
<comment type="function">
    <text evidence="1">Required for the formation of a threonylcarbamoyl group on adenosine at position 37 (t(6)A37) in tRNAs that read codons beginning with adenine. Is involved in the transfer of the threonylcarbamoyl moiety of threonylcarbamoyl-AMP (TC-AMP) to the N6 group of A37, together with TsaE and TsaB. TsaD likely plays a direct catalytic role in this reaction.</text>
</comment>
<comment type="catalytic activity">
    <reaction evidence="1">
        <text>L-threonylcarbamoyladenylate + adenosine(37) in tRNA = N(6)-L-threonylcarbamoyladenosine(37) in tRNA + AMP + H(+)</text>
        <dbReference type="Rhea" id="RHEA:37059"/>
        <dbReference type="Rhea" id="RHEA-COMP:10162"/>
        <dbReference type="Rhea" id="RHEA-COMP:10163"/>
        <dbReference type="ChEBI" id="CHEBI:15378"/>
        <dbReference type="ChEBI" id="CHEBI:73682"/>
        <dbReference type="ChEBI" id="CHEBI:74411"/>
        <dbReference type="ChEBI" id="CHEBI:74418"/>
        <dbReference type="ChEBI" id="CHEBI:456215"/>
        <dbReference type="EC" id="2.3.1.234"/>
    </reaction>
</comment>
<comment type="cofactor">
    <cofactor evidence="1">
        <name>Fe(2+)</name>
        <dbReference type="ChEBI" id="CHEBI:29033"/>
    </cofactor>
    <text evidence="1">Binds 1 Fe(2+) ion per subunit.</text>
</comment>
<comment type="subcellular location">
    <subcellularLocation>
        <location evidence="1">Cytoplasm</location>
    </subcellularLocation>
</comment>
<comment type="similarity">
    <text evidence="1">Belongs to the KAE1 / TsaD family.</text>
</comment>
<gene>
    <name evidence="1" type="primary">tsaD</name>
    <name type="synonym">gcp</name>
    <name type="ordered locus">Ctha_1142</name>
</gene>
<feature type="chain" id="PRO_1000145964" description="tRNA N6-adenosine threonylcarbamoyltransferase">
    <location>
        <begin position="1"/>
        <end position="352"/>
    </location>
</feature>
<feature type="binding site" evidence="1">
    <location>
        <position position="109"/>
    </location>
    <ligand>
        <name>Fe cation</name>
        <dbReference type="ChEBI" id="CHEBI:24875"/>
    </ligand>
</feature>
<feature type="binding site" evidence="1">
    <location>
        <position position="113"/>
    </location>
    <ligand>
        <name>Fe cation</name>
        <dbReference type="ChEBI" id="CHEBI:24875"/>
    </ligand>
</feature>
<feature type="binding site" evidence="1">
    <location>
        <begin position="136"/>
        <end position="140"/>
    </location>
    <ligand>
        <name>substrate</name>
    </ligand>
</feature>
<feature type="binding site" evidence="1">
    <location>
        <position position="169"/>
    </location>
    <ligand>
        <name>substrate</name>
    </ligand>
</feature>
<feature type="binding site" evidence="1">
    <location>
        <position position="182"/>
    </location>
    <ligand>
        <name>substrate</name>
    </ligand>
</feature>
<feature type="binding site" evidence="1">
    <location>
        <position position="186"/>
    </location>
    <ligand>
        <name>substrate</name>
    </ligand>
</feature>
<feature type="binding site" evidence="1">
    <location>
        <position position="284"/>
    </location>
    <ligand>
        <name>substrate</name>
    </ligand>
</feature>
<feature type="binding site" evidence="1">
    <location>
        <position position="312"/>
    </location>
    <ligand>
        <name>Fe cation</name>
        <dbReference type="ChEBI" id="CHEBI:24875"/>
    </ligand>
</feature>
<sequence>MNILGIETSCDETSAAVLKNGLVASNIISSQLCHSEFGGVVPELASREHDRMVVTVVEAALNAANIKKTELDFIAATAGPGLIGAVLVGLSFGQALGFSLGKPFIPINHIDAHIFSSFINDGTQHTFPAFPFVSLTVSGGHTMLCLVHDDLRIEPLGSTIDDAAGEAFDKTGKMLGLNYPAGPVIDKLAQTGDPNFHQFPQALTAQSKTGNDYKANLDFSFSGLKTSVLRYLSGQKPEFIQAHLNDICASIQEAITSVLVRKTILAAEQSGVRTISVTGGVSANSELRRKFEAASKAHGFSLHIPKPVYSTDNAAMIATLAHLKAERGLIEPCAYNAPAFAGYEKMKVFRAR</sequence>
<evidence type="ECO:0000255" key="1">
    <source>
        <dbReference type="HAMAP-Rule" id="MF_01445"/>
    </source>
</evidence>
<protein>
    <recommendedName>
        <fullName evidence="1">tRNA N6-adenosine threonylcarbamoyltransferase</fullName>
        <ecNumber evidence="1">2.3.1.234</ecNumber>
    </recommendedName>
    <alternativeName>
        <fullName evidence="1">N6-L-threonylcarbamoyladenine synthase</fullName>
        <shortName evidence="1">t(6)A synthase</shortName>
    </alternativeName>
    <alternativeName>
        <fullName evidence="1">t(6)A37 threonylcarbamoyladenosine biosynthesis protein TsaD</fullName>
    </alternativeName>
    <alternativeName>
        <fullName evidence="1">tRNA threonylcarbamoyladenosine biosynthesis protein TsaD</fullName>
    </alternativeName>
</protein>
<proteinExistence type="inferred from homology"/>
<organism>
    <name type="scientific">Chloroherpeton thalassium (strain ATCC 35110 / GB-78)</name>
    <dbReference type="NCBI Taxonomy" id="517418"/>
    <lineage>
        <taxon>Bacteria</taxon>
        <taxon>Pseudomonadati</taxon>
        <taxon>Chlorobiota</taxon>
        <taxon>Chlorobiia</taxon>
        <taxon>Chlorobiales</taxon>
        <taxon>Chloroherpetonaceae</taxon>
        <taxon>Chloroherpeton</taxon>
    </lineage>
</organism>
<reference key="1">
    <citation type="submission" date="2008-06" db="EMBL/GenBank/DDBJ databases">
        <title>Complete sequence of Chloroherpeton thalassium ATCC 35110.</title>
        <authorList>
            <consortium name="US DOE Joint Genome Institute"/>
            <person name="Lucas S."/>
            <person name="Copeland A."/>
            <person name="Lapidus A."/>
            <person name="Glavina del Rio T."/>
            <person name="Dalin E."/>
            <person name="Tice H."/>
            <person name="Bruce D."/>
            <person name="Goodwin L."/>
            <person name="Pitluck S."/>
            <person name="Schmutz J."/>
            <person name="Larimer F."/>
            <person name="Land M."/>
            <person name="Hauser L."/>
            <person name="Kyrpides N."/>
            <person name="Mikhailova N."/>
            <person name="Liu Z."/>
            <person name="Li T."/>
            <person name="Zhao F."/>
            <person name="Overmann J."/>
            <person name="Bryant D.A."/>
            <person name="Richardson P."/>
        </authorList>
    </citation>
    <scope>NUCLEOTIDE SEQUENCE [LARGE SCALE GENOMIC DNA]</scope>
    <source>
        <strain>ATCC 35110 / GB-78</strain>
    </source>
</reference>
<keyword id="KW-0012">Acyltransferase</keyword>
<keyword id="KW-0963">Cytoplasm</keyword>
<keyword id="KW-0408">Iron</keyword>
<keyword id="KW-0479">Metal-binding</keyword>
<keyword id="KW-1185">Reference proteome</keyword>
<keyword id="KW-0808">Transferase</keyword>
<keyword id="KW-0819">tRNA processing</keyword>
<dbReference type="EC" id="2.3.1.234" evidence="1"/>
<dbReference type="EMBL" id="CP001100">
    <property type="protein sequence ID" value="ACF13606.1"/>
    <property type="molecule type" value="Genomic_DNA"/>
</dbReference>
<dbReference type="RefSeq" id="WP_012499690.1">
    <property type="nucleotide sequence ID" value="NC_011026.1"/>
</dbReference>
<dbReference type="SMR" id="B3QYH8"/>
<dbReference type="STRING" id="517418.Ctha_1142"/>
<dbReference type="KEGG" id="cts:Ctha_1142"/>
<dbReference type="eggNOG" id="COG0533">
    <property type="taxonomic scope" value="Bacteria"/>
</dbReference>
<dbReference type="HOGENOM" id="CLU_023208_0_2_10"/>
<dbReference type="OrthoDB" id="9806197at2"/>
<dbReference type="Proteomes" id="UP000001208">
    <property type="component" value="Chromosome"/>
</dbReference>
<dbReference type="GO" id="GO:0005737">
    <property type="term" value="C:cytoplasm"/>
    <property type="evidence" value="ECO:0007669"/>
    <property type="project" value="UniProtKB-SubCell"/>
</dbReference>
<dbReference type="GO" id="GO:0005506">
    <property type="term" value="F:iron ion binding"/>
    <property type="evidence" value="ECO:0007669"/>
    <property type="project" value="UniProtKB-UniRule"/>
</dbReference>
<dbReference type="GO" id="GO:0061711">
    <property type="term" value="F:N(6)-L-threonylcarbamoyladenine synthase activity"/>
    <property type="evidence" value="ECO:0007669"/>
    <property type="project" value="UniProtKB-EC"/>
</dbReference>
<dbReference type="GO" id="GO:0002949">
    <property type="term" value="P:tRNA threonylcarbamoyladenosine modification"/>
    <property type="evidence" value="ECO:0007669"/>
    <property type="project" value="UniProtKB-UniRule"/>
</dbReference>
<dbReference type="CDD" id="cd24133">
    <property type="entry name" value="ASKHA_NBD_TsaD_bac"/>
    <property type="match status" value="1"/>
</dbReference>
<dbReference type="FunFam" id="3.30.420.40:FF:000012">
    <property type="entry name" value="tRNA N6-adenosine threonylcarbamoyltransferase"/>
    <property type="match status" value="1"/>
</dbReference>
<dbReference type="FunFam" id="3.30.420.40:FF:000040">
    <property type="entry name" value="tRNA N6-adenosine threonylcarbamoyltransferase"/>
    <property type="match status" value="1"/>
</dbReference>
<dbReference type="Gene3D" id="3.30.420.40">
    <property type="match status" value="2"/>
</dbReference>
<dbReference type="HAMAP" id="MF_01445">
    <property type="entry name" value="TsaD"/>
    <property type="match status" value="1"/>
</dbReference>
<dbReference type="InterPro" id="IPR043129">
    <property type="entry name" value="ATPase_NBD"/>
</dbReference>
<dbReference type="InterPro" id="IPR000905">
    <property type="entry name" value="Gcp-like_dom"/>
</dbReference>
<dbReference type="InterPro" id="IPR017861">
    <property type="entry name" value="KAE1/TsaD"/>
</dbReference>
<dbReference type="InterPro" id="IPR022450">
    <property type="entry name" value="TsaD"/>
</dbReference>
<dbReference type="NCBIfam" id="TIGR00329">
    <property type="entry name" value="gcp_kae1"/>
    <property type="match status" value="1"/>
</dbReference>
<dbReference type="NCBIfam" id="TIGR03723">
    <property type="entry name" value="T6A_TsaD_YgjD"/>
    <property type="match status" value="1"/>
</dbReference>
<dbReference type="PANTHER" id="PTHR11735">
    <property type="entry name" value="TRNA N6-ADENOSINE THREONYLCARBAMOYLTRANSFERASE"/>
    <property type="match status" value="1"/>
</dbReference>
<dbReference type="PANTHER" id="PTHR11735:SF6">
    <property type="entry name" value="TRNA N6-ADENOSINE THREONYLCARBAMOYLTRANSFERASE, MITOCHONDRIAL"/>
    <property type="match status" value="1"/>
</dbReference>
<dbReference type="Pfam" id="PF00814">
    <property type="entry name" value="TsaD"/>
    <property type="match status" value="1"/>
</dbReference>
<dbReference type="PRINTS" id="PR00789">
    <property type="entry name" value="OSIALOPTASE"/>
</dbReference>
<dbReference type="SUPFAM" id="SSF53067">
    <property type="entry name" value="Actin-like ATPase domain"/>
    <property type="match status" value="2"/>
</dbReference>
<name>TSAD_CHLT3</name>